<name>ZAPA_GEOTN</name>
<proteinExistence type="inferred from homology"/>
<protein>
    <recommendedName>
        <fullName evidence="1">Cell division protein ZapA</fullName>
    </recommendedName>
    <alternativeName>
        <fullName evidence="1">Z ring-associated protein ZapA</fullName>
    </alternativeName>
</protein>
<feature type="chain" id="PRO_0000345689" description="Cell division protein ZapA">
    <location>
        <begin position="1"/>
        <end position="91"/>
    </location>
</feature>
<feature type="coiled-coil region" evidence="1">
    <location>
        <begin position="59"/>
        <end position="86"/>
    </location>
</feature>
<evidence type="ECO:0000255" key="1">
    <source>
        <dbReference type="HAMAP-Rule" id="MF_02013"/>
    </source>
</evidence>
<gene>
    <name evidence="1" type="primary">zapA</name>
    <name type="ordered locus">GTNG_2623</name>
</gene>
<accession>A4IRL4</accession>
<comment type="function">
    <text evidence="1">Activator of cell division through the inhibition of FtsZ GTPase activity, therefore promoting FtsZ assembly into bundles of protofilaments necessary for the formation of the division Z ring. It is recruited early at mid-cell but it is not essential for cell division.</text>
</comment>
<comment type="subunit">
    <text evidence="1">Homodimer. Interacts with FtsZ.</text>
</comment>
<comment type="subcellular location">
    <subcellularLocation>
        <location evidence="1">Cytoplasm</location>
    </subcellularLocation>
    <text evidence="1">Localizes at mid-cell. In sporulating cells, localizes near the cell poles.</text>
</comment>
<comment type="similarity">
    <text evidence="1">Belongs to the ZapA family. Type 2 subfamily.</text>
</comment>
<sequence>MTDEPKTRVSVRIYGQDYTIVGTESPAHIRLVAAFVDDKMHEFSERNPVLDVPKLAVLTAVNIANEYLKLKEEYDRLAAKLRREKGGEDDD</sequence>
<dbReference type="EMBL" id="CP000557">
    <property type="protein sequence ID" value="ABO67968.1"/>
    <property type="molecule type" value="Genomic_DNA"/>
</dbReference>
<dbReference type="RefSeq" id="WP_008881153.1">
    <property type="nucleotide sequence ID" value="NC_009328.1"/>
</dbReference>
<dbReference type="SMR" id="A4IRL4"/>
<dbReference type="GeneID" id="87623231"/>
<dbReference type="KEGG" id="gtn:GTNG_2623"/>
<dbReference type="eggNOG" id="COG3027">
    <property type="taxonomic scope" value="Bacteria"/>
</dbReference>
<dbReference type="HOGENOM" id="CLU_116623_4_0_9"/>
<dbReference type="Proteomes" id="UP000001578">
    <property type="component" value="Chromosome"/>
</dbReference>
<dbReference type="GO" id="GO:0032153">
    <property type="term" value="C:cell division site"/>
    <property type="evidence" value="ECO:0007669"/>
    <property type="project" value="TreeGrafter"/>
</dbReference>
<dbReference type="GO" id="GO:0030428">
    <property type="term" value="C:cell septum"/>
    <property type="evidence" value="ECO:0007669"/>
    <property type="project" value="TreeGrafter"/>
</dbReference>
<dbReference type="GO" id="GO:0005829">
    <property type="term" value="C:cytosol"/>
    <property type="evidence" value="ECO:0007669"/>
    <property type="project" value="TreeGrafter"/>
</dbReference>
<dbReference type="GO" id="GO:0005886">
    <property type="term" value="C:plasma membrane"/>
    <property type="evidence" value="ECO:0007669"/>
    <property type="project" value="UniProtKB-UniRule"/>
</dbReference>
<dbReference type="GO" id="GO:0000917">
    <property type="term" value="P:division septum assembly"/>
    <property type="evidence" value="ECO:0007669"/>
    <property type="project" value="UniProtKB-KW"/>
</dbReference>
<dbReference type="GO" id="GO:0043093">
    <property type="term" value="P:FtsZ-dependent cytokinesis"/>
    <property type="evidence" value="ECO:0007669"/>
    <property type="project" value="TreeGrafter"/>
</dbReference>
<dbReference type="GO" id="GO:0000921">
    <property type="term" value="P:septin ring assembly"/>
    <property type="evidence" value="ECO:0007669"/>
    <property type="project" value="TreeGrafter"/>
</dbReference>
<dbReference type="Gene3D" id="6.10.250.790">
    <property type="match status" value="1"/>
</dbReference>
<dbReference type="HAMAP" id="MF_02013">
    <property type="entry name" value="ZapA_type2"/>
    <property type="match status" value="1"/>
</dbReference>
<dbReference type="InterPro" id="IPR053712">
    <property type="entry name" value="Bac_CellDiv_Activator"/>
</dbReference>
<dbReference type="InterPro" id="IPR007838">
    <property type="entry name" value="Cell_div_ZapA-like"/>
</dbReference>
<dbReference type="InterPro" id="IPR036192">
    <property type="entry name" value="Cell_div_ZapA-like_sf"/>
</dbReference>
<dbReference type="InterPro" id="IPR023688">
    <property type="entry name" value="Cell_div_ZapA_firmicutes"/>
</dbReference>
<dbReference type="NCBIfam" id="NF010724">
    <property type="entry name" value="PRK14126.1"/>
    <property type="match status" value="1"/>
</dbReference>
<dbReference type="PANTHER" id="PTHR34981">
    <property type="entry name" value="CELL DIVISION PROTEIN ZAPA"/>
    <property type="match status" value="1"/>
</dbReference>
<dbReference type="PANTHER" id="PTHR34981:SF1">
    <property type="entry name" value="CELL DIVISION PROTEIN ZAPA"/>
    <property type="match status" value="1"/>
</dbReference>
<dbReference type="Pfam" id="PF05164">
    <property type="entry name" value="ZapA"/>
    <property type="match status" value="1"/>
</dbReference>
<dbReference type="SUPFAM" id="SSF102829">
    <property type="entry name" value="Cell division protein ZapA-like"/>
    <property type="match status" value="1"/>
</dbReference>
<reference key="1">
    <citation type="journal article" date="2007" name="Proc. Natl. Acad. Sci. U.S.A.">
        <title>Genome and proteome of long-chain alkane degrading Geobacillus thermodenitrificans NG80-2 isolated from a deep-subsurface oil reservoir.</title>
        <authorList>
            <person name="Feng L."/>
            <person name="Wang W."/>
            <person name="Cheng J."/>
            <person name="Ren Y."/>
            <person name="Zhao G."/>
            <person name="Gao C."/>
            <person name="Tang Y."/>
            <person name="Liu X."/>
            <person name="Han W."/>
            <person name="Peng X."/>
            <person name="Liu R."/>
            <person name="Wang L."/>
        </authorList>
    </citation>
    <scope>NUCLEOTIDE SEQUENCE [LARGE SCALE GENOMIC DNA]</scope>
    <source>
        <strain>NG80-2</strain>
    </source>
</reference>
<organism>
    <name type="scientific">Geobacillus thermodenitrificans (strain NG80-2)</name>
    <dbReference type="NCBI Taxonomy" id="420246"/>
    <lineage>
        <taxon>Bacteria</taxon>
        <taxon>Bacillati</taxon>
        <taxon>Bacillota</taxon>
        <taxon>Bacilli</taxon>
        <taxon>Bacillales</taxon>
        <taxon>Anoxybacillaceae</taxon>
        <taxon>Geobacillus</taxon>
    </lineage>
</organism>
<keyword id="KW-0131">Cell cycle</keyword>
<keyword id="KW-0132">Cell division</keyword>
<keyword id="KW-0175">Coiled coil</keyword>
<keyword id="KW-0963">Cytoplasm</keyword>
<keyword id="KW-0717">Septation</keyword>